<name>Y8293_DICDI</name>
<protein>
    <recommendedName>
        <fullName>Uncharacterized protein DDB_G0276777</fullName>
    </recommendedName>
</protein>
<keyword id="KW-1185">Reference proteome</keyword>
<dbReference type="EMBL" id="AAFI02000019">
    <property type="protein sequence ID" value="EAL68890.1"/>
    <property type="molecule type" value="Genomic_DNA"/>
</dbReference>
<dbReference type="RefSeq" id="XP_642861.1">
    <property type="nucleotide sequence ID" value="XM_637769.1"/>
</dbReference>
<dbReference type="PaxDb" id="44689-DDB0168293"/>
<dbReference type="EnsemblProtists" id="EAL68890">
    <property type="protein sequence ID" value="EAL68890"/>
    <property type="gene ID" value="DDB_G0276777"/>
</dbReference>
<dbReference type="GeneID" id="8620727"/>
<dbReference type="KEGG" id="ddi:DDB_G0276777"/>
<dbReference type="dictyBase" id="DDB_G0276777"/>
<dbReference type="VEuPathDB" id="AmoebaDB:DDB_G0276777"/>
<dbReference type="HOGENOM" id="CLU_2563209_0_0_1"/>
<dbReference type="InParanoid" id="Q7KWY4"/>
<dbReference type="PRO" id="PR:Q7KWY4"/>
<dbReference type="Proteomes" id="UP000002195">
    <property type="component" value="Chromosome 2"/>
</dbReference>
<dbReference type="GO" id="GO:0005739">
    <property type="term" value="C:mitochondrion"/>
    <property type="evidence" value="ECO:0007669"/>
    <property type="project" value="InterPro"/>
</dbReference>
<dbReference type="GO" id="GO:0033617">
    <property type="term" value="P:mitochondrial cytochrome c oxidase assembly"/>
    <property type="evidence" value="ECO:0007669"/>
    <property type="project" value="InterPro"/>
</dbReference>
<dbReference type="InterPro" id="IPR018625">
    <property type="entry name" value="Pet100"/>
</dbReference>
<dbReference type="Pfam" id="PF09803">
    <property type="entry name" value="Pet100"/>
    <property type="match status" value="1"/>
</dbReference>
<sequence>MAPQKVKALELLKWGVYFGMPIIATIHVLDPDRLDNLIMKHQFVVYPPEAQTQEEFKKKELEYFEKRTTKRLLEQQQQPTTN</sequence>
<gene>
    <name type="ORF">DDB_G0276777</name>
</gene>
<proteinExistence type="predicted"/>
<reference key="1">
    <citation type="journal article" date="2002" name="Nature">
        <title>Sequence and analysis of chromosome 2 of Dictyostelium discoideum.</title>
        <authorList>
            <person name="Gloeckner G."/>
            <person name="Eichinger L."/>
            <person name="Szafranski K."/>
            <person name="Pachebat J.A."/>
            <person name="Bankier A.T."/>
            <person name="Dear P.H."/>
            <person name="Lehmann R."/>
            <person name="Baumgart C."/>
            <person name="Parra G."/>
            <person name="Abril J.F."/>
            <person name="Guigo R."/>
            <person name="Kumpf K."/>
            <person name="Tunggal B."/>
            <person name="Cox E.C."/>
            <person name="Quail M.A."/>
            <person name="Platzer M."/>
            <person name="Rosenthal A."/>
            <person name="Noegel A.A."/>
        </authorList>
    </citation>
    <scope>NUCLEOTIDE SEQUENCE [LARGE SCALE GENOMIC DNA]</scope>
    <source>
        <strain>AX4</strain>
    </source>
</reference>
<reference key="2">
    <citation type="journal article" date="2005" name="Nature">
        <title>The genome of the social amoeba Dictyostelium discoideum.</title>
        <authorList>
            <person name="Eichinger L."/>
            <person name="Pachebat J.A."/>
            <person name="Gloeckner G."/>
            <person name="Rajandream M.A."/>
            <person name="Sucgang R."/>
            <person name="Berriman M."/>
            <person name="Song J."/>
            <person name="Olsen R."/>
            <person name="Szafranski K."/>
            <person name="Xu Q."/>
            <person name="Tunggal B."/>
            <person name="Kummerfeld S."/>
            <person name="Madera M."/>
            <person name="Konfortov B.A."/>
            <person name="Rivero F."/>
            <person name="Bankier A.T."/>
            <person name="Lehmann R."/>
            <person name="Hamlin N."/>
            <person name="Davies R."/>
            <person name="Gaudet P."/>
            <person name="Fey P."/>
            <person name="Pilcher K."/>
            <person name="Chen G."/>
            <person name="Saunders D."/>
            <person name="Sodergren E.J."/>
            <person name="Davis P."/>
            <person name="Kerhornou A."/>
            <person name="Nie X."/>
            <person name="Hall N."/>
            <person name="Anjard C."/>
            <person name="Hemphill L."/>
            <person name="Bason N."/>
            <person name="Farbrother P."/>
            <person name="Desany B."/>
            <person name="Just E."/>
            <person name="Morio T."/>
            <person name="Rost R."/>
            <person name="Churcher C.M."/>
            <person name="Cooper J."/>
            <person name="Haydock S."/>
            <person name="van Driessche N."/>
            <person name="Cronin A."/>
            <person name="Goodhead I."/>
            <person name="Muzny D.M."/>
            <person name="Mourier T."/>
            <person name="Pain A."/>
            <person name="Lu M."/>
            <person name="Harper D."/>
            <person name="Lindsay R."/>
            <person name="Hauser H."/>
            <person name="James K.D."/>
            <person name="Quiles M."/>
            <person name="Madan Babu M."/>
            <person name="Saito T."/>
            <person name="Buchrieser C."/>
            <person name="Wardroper A."/>
            <person name="Felder M."/>
            <person name="Thangavelu M."/>
            <person name="Johnson D."/>
            <person name="Knights A."/>
            <person name="Loulseged H."/>
            <person name="Mungall K.L."/>
            <person name="Oliver K."/>
            <person name="Price C."/>
            <person name="Quail M.A."/>
            <person name="Urushihara H."/>
            <person name="Hernandez J."/>
            <person name="Rabbinowitsch E."/>
            <person name="Steffen D."/>
            <person name="Sanders M."/>
            <person name="Ma J."/>
            <person name="Kohara Y."/>
            <person name="Sharp S."/>
            <person name="Simmonds M.N."/>
            <person name="Spiegler S."/>
            <person name="Tivey A."/>
            <person name="Sugano S."/>
            <person name="White B."/>
            <person name="Walker D."/>
            <person name="Woodward J.R."/>
            <person name="Winckler T."/>
            <person name="Tanaka Y."/>
            <person name="Shaulsky G."/>
            <person name="Schleicher M."/>
            <person name="Weinstock G.M."/>
            <person name="Rosenthal A."/>
            <person name="Cox E.C."/>
            <person name="Chisholm R.L."/>
            <person name="Gibbs R.A."/>
            <person name="Loomis W.F."/>
            <person name="Platzer M."/>
            <person name="Kay R.R."/>
            <person name="Williams J.G."/>
            <person name="Dear P.H."/>
            <person name="Noegel A.A."/>
            <person name="Barrell B.G."/>
            <person name="Kuspa A."/>
        </authorList>
    </citation>
    <scope>NUCLEOTIDE SEQUENCE [LARGE SCALE GENOMIC DNA]</scope>
    <source>
        <strain>AX4</strain>
    </source>
</reference>
<feature type="chain" id="PRO_0000348154" description="Uncharacterized protein DDB_G0276777">
    <location>
        <begin position="1"/>
        <end position="82"/>
    </location>
</feature>
<organism>
    <name type="scientific">Dictyostelium discoideum</name>
    <name type="common">Social amoeba</name>
    <dbReference type="NCBI Taxonomy" id="44689"/>
    <lineage>
        <taxon>Eukaryota</taxon>
        <taxon>Amoebozoa</taxon>
        <taxon>Evosea</taxon>
        <taxon>Eumycetozoa</taxon>
        <taxon>Dictyostelia</taxon>
        <taxon>Dictyosteliales</taxon>
        <taxon>Dictyosteliaceae</taxon>
        <taxon>Dictyostelium</taxon>
    </lineage>
</organism>
<accession>Q7KWY4</accession>
<accession>Q550S1</accession>